<sequence length="92" mass="10362">MARSLKKGPYVDLHLLKKVDAARASNDKRPIKTWSRRSTILPDFIGLTIAVHNGRTHVPVFISDNMVGHKLGEFSLTRTFKGHLADKKAKKK</sequence>
<reference key="1">
    <citation type="journal article" date="2007" name="PLoS Genet.">
        <title>Meningococcal genetic variation mechanisms viewed through comparative analysis of serogroup C strain FAM18.</title>
        <authorList>
            <person name="Bentley S.D."/>
            <person name="Vernikos G.S."/>
            <person name="Snyder L.A.S."/>
            <person name="Churcher C."/>
            <person name="Arrowsmith C."/>
            <person name="Chillingworth T."/>
            <person name="Cronin A."/>
            <person name="Davis P.H."/>
            <person name="Holroyd N.E."/>
            <person name="Jagels K."/>
            <person name="Maddison M."/>
            <person name="Moule S."/>
            <person name="Rabbinowitsch E."/>
            <person name="Sharp S."/>
            <person name="Unwin L."/>
            <person name="Whitehead S."/>
            <person name="Quail M.A."/>
            <person name="Achtman M."/>
            <person name="Barrell B.G."/>
            <person name="Saunders N.J."/>
            <person name="Parkhill J."/>
        </authorList>
    </citation>
    <scope>NUCLEOTIDE SEQUENCE [LARGE SCALE GENOMIC DNA]</scope>
    <source>
        <strain>ATCC 700532 / DSM 15464 / FAM18</strain>
    </source>
</reference>
<organism>
    <name type="scientific">Neisseria meningitidis serogroup C / serotype 2a (strain ATCC 700532 / DSM 15464 / FAM18)</name>
    <dbReference type="NCBI Taxonomy" id="272831"/>
    <lineage>
        <taxon>Bacteria</taxon>
        <taxon>Pseudomonadati</taxon>
        <taxon>Pseudomonadota</taxon>
        <taxon>Betaproteobacteria</taxon>
        <taxon>Neisseriales</taxon>
        <taxon>Neisseriaceae</taxon>
        <taxon>Neisseria</taxon>
    </lineage>
</organism>
<accession>A1KRH7</accession>
<comment type="function">
    <text evidence="1">Protein S19 forms a complex with S13 that binds strongly to the 16S ribosomal RNA.</text>
</comment>
<comment type="similarity">
    <text evidence="1">Belongs to the universal ribosomal protein uS19 family.</text>
</comment>
<gene>
    <name evidence="1" type="primary">rpsS</name>
    <name type="ordered locus">NMC0136</name>
</gene>
<name>RS19_NEIMF</name>
<proteinExistence type="inferred from homology"/>
<feature type="chain" id="PRO_1000051085" description="Small ribosomal subunit protein uS19">
    <location>
        <begin position="1"/>
        <end position="92"/>
    </location>
</feature>
<dbReference type="EMBL" id="AM421808">
    <property type="protein sequence ID" value="CAM09455.1"/>
    <property type="molecule type" value="Genomic_DNA"/>
</dbReference>
<dbReference type="RefSeq" id="WP_002215422.1">
    <property type="nucleotide sequence ID" value="NC_008767.1"/>
</dbReference>
<dbReference type="SMR" id="A1KRH7"/>
<dbReference type="GeneID" id="93387221"/>
<dbReference type="KEGG" id="nmc:NMC0136"/>
<dbReference type="HOGENOM" id="CLU_144911_0_1_4"/>
<dbReference type="Proteomes" id="UP000002286">
    <property type="component" value="Chromosome"/>
</dbReference>
<dbReference type="GO" id="GO:0005737">
    <property type="term" value="C:cytoplasm"/>
    <property type="evidence" value="ECO:0007669"/>
    <property type="project" value="UniProtKB-ARBA"/>
</dbReference>
<dbReference type="GO" id="GO:0015935">
    <property type="term" value="C:small ribosomal subunit"/>
    <property type="evidence" value="ECO:0007669"/>
    <property type="project" value="InterPro"/>
</dbReference>
<dbReference type="GO" id="GO:0019843">
    <property type="term" value="F:rRNA binding"/>
    <property type="evidence" value="ECO:0007669"/>
    <property type="project" value="UniProtKB-UniRule"/>
</dbReference>
<dbReference type="GO" id="GO:0003735">
    <property type="term" value="F:structural constituent of ribosome"/>
    <property type="evidence" value="ECO:0007669"/>
    <property type="project" value="InterPro"/>
</dbReference>
<dbReference type="GO" id="GO:0000028">
    <property type="term" value="P:ribosomal small subunit assembly"/>
    <property type="evidence" value="ECO:0007669"/>
    <property type="project" value="TreeGrafter"/>
</dbReference>
<dbReference type="GO" id="GO:0006412">
    <property type="term" value="P:translation"/>
    <property type="evidence" value="ECO:0007669"/>
    <property type="project" value="UniProtKB-UniRule"/>
</dbReference>
<dbReference type="FunFam" id="3.30.860.10:FF:000001">
    <property type="entry name" value="30S ribosomal protein S19"/>
    <property type="match status" value="1"/>
</dbReference>
<dbReference type="Gene3D" id="3.30.860.10">
    <property type="entry name" value="30s Ribosomal Protein S19, Chain A"/>
    <property type="match status" value="1"/>
</dbReference>
<dbReference type="HAMAP" id="MF_00531">
    <property type="entry name" value="Ribosomal_uS19"/>
    <property type="match status" value="1"/>
</dbReference>
<dbReference type="InterPro" id="IPR002222">
    <property type="entry name" value="Ribosomal_uS19"/>
</dbReference>
<dbReference type="InterPro" id="IPR005732">
    <property type="entry name" value="Ribosomal_uS19_bac-type"/>
</dbReference>
<dbReference type="InterPro" id="IPR020934">
    <property type="entry name" value="Ribosomal_uS19_CS"/>
</dbReference>
<dbReference type="InterPro" id="IPR023575">
    <property type="entry name" value="Ribosomal_uS19_SF"/>
</dbReference>
<dbReference type="NCBIfam" id="TIGR01050">
    <property type="entry name" value="rpsS_bact"/>
    <property type="match status" value="1"/>
</dbReference>
<dbReference type="PANTHER" id="PTHR11880">
    <property type="entry name" value="RIBOSOMAL PROTEIN S19P FAMILY MEMBER"/>
    <property type="match status" value="1"/>
</dbReference>
<dbReference type="PANTHER" id="PTHR11880:SF8">
    <property type="entry name" value="SMALL RIBOSOMAL SUBUNIT PROTEIN US19M"/>
    <property type="match status" value="1"/>
</dbReference>
<dbReference type="Pfam" id="PF00203">
    <property type="entry name" value="Ribosomal_S19"/>
    <property type="match status" value="1"/>
</dbReference>
<dbReference type="PIRSF" id="PIRSF002144">
    <property type="entry name" value="Ribosomal_S19"/>
    <property type="match status" value="1"/>
</dbReference>
<dbReference type="PRINTS" id="PR00975">
    <property type="entry name" value="RIBOSOMALS19"/>
</dbReference>
<dbReference type="SUPFAM" id="SSF54570">
    <property type="entry name" value="Ribosomal protein S19"/>
    <property type="match status" value="1"/>
</dbReference>
<dbReference type="PROSITE" id="PS00323">
    <property type="entry name" value="RIBOSOMAL_S19"/>
    <property type="match status" value="1"/>
</dbReference>
<keyword id="KW-0687">Ribonucleoprotein</keyword>
<keyword id="KW-0689">Ribosomal protein</keyword>
<keyword id="KW-0694">RNA-binding</keyword>
<keyword id="KW-0699">rRNA-binding</keyword>
<protein>
    <recommendedName>
        <fullName evidence="1">Small ribosomal subunit protein uS19</fullName>
    </recommendedName>
    <alternativeName>
        <fullName evidence="2">30S ribosomal protein S19</fullName>
    </alternativeName>
</protein>
<evidence type="ECO:0000255" key="1">
    <source>
        <dbReference type="HAMAP-Rule" id="MF_00531"/>
    </source>
</evidence>
<evidence type="ECO:0000305" key="2"/>